<keyword id="KW-0106">Calcium</keyword>
<keyword id="KW-0130">Cell adhesion</keyword>
<keyword id="KW-1003">Cell membrane</keyword>
<keyword id="KW-0165">Cleavage on pair of basic residues</keyword>
<keyword id="KW-0325">Glycoprotein</keyword>
<keyword id="KW-0472">Membrane</keyword>
<keyword id="KW-0479">Metal-binding</keyword>
<keyword id="KW-1185">Reference proteome</keyword>
<keyword id="KW-0677">Repeat</keyword>
<keyword id="KW-0732">Signal</keyword>
<keyword id="KW-0812">Transmembrane</keyword>
<keyword id="KW-1133">Transmembrane helix</keyword>
<protein>
    <recommendedName>
        <fullName>Cadherin-11</fullName>
    </recommendedName>
</protein>
<gene>
    <name type="primary">CDH11</name>
</gene>
<evidence type="ECO:0000250" key="1"/>
<evidence type="ECO:0000250" key="2">
    <source>
        <dbReference type="UniProtKB" id="P55287"/>
    </source>
</evidence>
<evidence type="ECO:0000255" key="3"/>
<evidence type="ECO:0000255" key="4">
    <source>
        <dbReference type="PROSITE-ProRule" id="PRU00043"/>
    </source>
</evidence>
<evidence type="ECO:0000305" key="5"/>
<organism>
    <name type="scientific">Gallus gallus</name>
    <name type="common">Chicken</name>
    <dbReference type="NCBI Taxonomy" id="9031"/>
    <lineage>
        <taxon>Eukaryota</taxon>
        <taxon>Metazoa</taxon>
        <taxon>Chordata</taxon>
        <taxon>Craniata</taxon>
        <taxon>Vertebrata</taxon>
        <taxon>Euteleostomi</taxon>
        <taxon>Archelosauria</taxon>
        <taxon>Archosauria</taxon>
        <taxon>Dinosauria</taxon>
        <taxon>Saurischia</taxon>
        <taxon>Theropoda</taxon>
        <taxon>Coelurosauria</taxon>
        <taxon>Aves</taxon>
        <taxon>Neognathae</taxon>
        <taxon>Galloanserae</taxon>
        <taxon>Galliformes</taxon>
        <taxon>Phasianidae</taxon>
        <taxon>Phasianinae</taxon>
        <taxon>Gallus</taxon>
    </lineage>
</organism>
<sequence length="792" mass="87573">MKEDNCLHAALICLGMLYYSHAITTEKLNHVRPSLHGHHEKGKEGQVLHRSKRGWVWNQFFVIEEYTGPDPVLVGRLHSDIDSGDGNIKYILSGEGAGIIFVIDDKSGNIHATKTLDREERAQYTLTAQAVDRNTNRPLEPPSEFIVKVQDINDNPPEFLHENYHANVPERSNVGTSVIQVTASDADDPTYGNSAKLVYSILEGQPYFSVEAQTGIIRTALPNMDREAKEEYHVVIQAKDMGGHMGGLSGTTKVTITLTDVNDNPPKFPQSVYQMSVSEAAVPGEEVGRVKAKDPDIGENGLVAYSIIDGDGMDMFEITTDYETQEGVVKLKKVLDFETKKSYSLKVEAANVHIDPKFISNGPFKDTVTVKITVEDADEPPVFLKPSYIFEVQENAASGTVVGKVHAKDPDAANSAIRYSIDRHTDLERYFTINADDGNIKTIKALDREEIAWHNISVFAVEVHKQHQEAKVPVAIKVVDVNDNAPKFAAAYEAFVCENARSNQQFITISADDKDDSANGPRFIFSLPPEIIHNPNFSLRDNRDNTASVLVRREGFSRQKQDLYLLPIVISDGGLPPMSSTNTLTIRVCGCDSNGSLLSCNAEAYILNAGLSTGALIAILACIVILLVIVVLFVTLKRQKKEPLIVFEEEDVRENIITYDDEGGGEEDTEAFDIATLQNPDGINGFIPRKDIKPEYQYMPRPGLRPAPNSVDVDDFINTRIQEADNDPTAPPYDSIQIYGYEGRGSVAGSLSSLESATTDSDLDYDYLQNWGPRFKKLADLYGSKDTFDDDS</sequence>
<proteinExistence type="evidence at transcript level"/>
<accession>O93319</accession>
<reference key="1">
    <citation type="submission" date="1998-03" db="EMBL/GenBank/DDBJ databases">
        <title>Molecular cloning of chick cadherin 11 and its expression during smooth muscle differentiation and formation of the tunica media.</title>
        <authorList>
            <person name="Wei J."/>
            <person name="Dong X.R."/>
            <person name="Topouzis S."/>
            <person name="Zimmer W.E."/>
            <person name="Broders F."/>
            <person name="Thiery J.P."/>
            <person name="Koteliansky V."/>
            <person name="Majesky M.W."/>
        </authorList>
    </citation>
    <scope>NUCLEOTIDE SEQUENCE [MRNA]</scope>
    <source>
        <strain>White leghorn</strain>
    </source>
</reference>
<dbReference type="EMBL" id="AF055342">
    <property type="protein sequence ID" value="AAC33675.1"/>
    <property type="molecule type" value="mRNA"/>
</dbReference>
<dbReference type="RefSeq" id="NP_001004371.1">
    <property type="nucleotide sequence ID" value="NM_001004371.1"/>
</dbReference>
<dbReference type="SMR" id="O93319"/>
<dbReference type="FunCoup" id="O93319">
    <property type="interactions" value="10"/>
</dbReference>
<dbReference type="STRING" id="9031.ENSGALP00000045299"/>
<dbReference type="GlyCosmos" id="O93319">
    <property type="glycosylation" value="3 sites, No reported glycans"/>
</dbReference>
<dbReference type="GlyGen" id="O93319">
    <property type="glycosylation" value="3 sites"/>
</dbReference>
<dbReference type="PaxDb" id="9031-ENSGALP00000008451"/>
<dbReference type="GeneID" id="415797"/>
<dbReference type="KEGG" id="gga:415797"/>
<dbReference type="CTD" id="1009"/>
<dbReference type="VEuPathDB" id="HostDB:geneid_415797"/>
<dbReference type="eggNOG" id="KOG3594">
    <property type="taxonomic scope" value="Eukaryota"/>
</dbReference>
<dbReference type="InParanoid" id="O93319"/>
<dbReference type="OrthoDB" id="8188793at2759"/>
<dbReference type="PhylomeDB" id="O93319"/>
<dbReference type="PRO" id="PR:O93319"/>
<dbReference type="Proteomes" id="UP000000539">
    <property type="component" value="Unassembled WGS sequence"/>
</dbReference>
<dbReference type="GO" id="GO:0005912">
    <property type="term" value="C:adherens junction"/>
    <property type="evidence" value="ECO:0000318"/>
    <property type="project" value="GO_Central"/>
</dbReference>
<dbReference type="GO" id="GO:0016342">
    <property type="term" value="C:catenin complex"/>
    <property type="evidence" value="ECO:0000318"/>
    <property type="project" value="GO_Central"/>
</dbReference>
<dbReference type="GO" id="GO:0005911">
    <property type="term" value="C:cell-cell junction"/>
    <property type="evidence" value="ECO:0000314"/>
    <property type="project" value="AgBase"/>
</dbReference>
<dbReference type="GO" id="GO:0005886">
    <property type="term" value="C:plasma membrane"/>
    <property type="evidence" value="ECO:0000314"/>
    <property type="project" value="AgBase"/>
</dbReference>
<dbReference type="GO" id="GO:0008013">
    <property type="term" value="F:beta-catenin binding"/>
    <property type="evidence" value="ECO:0000318"/>
    <property type="project" value="GO_Central"/>
</dbReference>
<dbReference type="GO" id="GO:0045296">
    <property type="term" value="F:cadherin binding"/>
    <property type="evidence" value="ECO:0000318"/>
    <property type="project" value="GO_Central"/>
</dbReference>
<dbReference type="GO" id="GO:0005509">
    <property type="term" value="F:calcium ion binding"/>
    <property type="evidence" value="ECO:0007669"/>
    <property type="project" value="InterPro"/>
</dbReference>
<dbReference type="GO" id="GO:0046983">
    <property type="term" value="F:protein dimerization activity"/>
    <property type="evidence" value="ECO:0000303"/>
    <property type="project" value="AgBase"/>
</dbReference>
<dbReference type="GO" id="GO:0034332">
    <property type="term" value="P:adherens junction organization"/>
    <property type="evidence" value="ECO:0000318"/>
    <property type="project" value="GO_Central"/>
</dbReference>
<dbReference type="GO" id="GO:0016339">
    <property type="term" value="P:calcium-dependent cell-cell adhesion via plasma membrane cell adhesion molecules"/>
    <property type="evidence" value="ECO:0000318"/>
    <property type="project" value="GO_Central"/>
</dbReference>
<dbReference type="GO" id="GO:0016477">
    <property type="term" value="P:cell migration"/>
    <property type="evidence" value="ECO:0000318"/>
    <property type="project" value="GO_Central"/>
</dbReference>
<dbReference type="GO" id="GO:0000902">
    <property type="term" value="P:cell morphogenesis"/>
    <property type="evidence" value="ECO:0000318"/>
    <property type="project" value="GO_Central"/>
</dbReference>
<dbReference type="GO" id="GO:0098609">
    <property type="term" value="P:cell-cell adhesion"/>
    <property type="evidence" value="ECO:0000315"/>
    <property type="project" value="AgBase"/>
</dbReference>
<dbReference type="GO" id="GO:0044331">
    <property type="term" value="P:cell-cell adhesion mediated by cadherin"/>
    <property type="evidence" value="ECO:0000318"/>
    <property type="project" value="GO_Central"/>
</dbReference>
<dbReference type="GO" id="GO:0007043">
    <property type="term" value="P:cell-cell junction assembly"/>
    <property type="evidence" value="ECO:0000318"/>
    <property type="project" value="GO_Central"/>
</dbReference>
<dbReference type="GO" id="GO:0030199">
    <property type="term" value="P:collagen fibril organization"/>
    <property type="evidence" value="ECO:0000315"/>
    <property type="project" value="AgBase"/>
</dbReference>
<dbReference type="GO" id="GO:0007156">
    <property type="term" value="P:homophilic cell adhesion via plasma membrane adhesion molecules"/>
    <property type="evidence" value="ECO:0007669"/>
    <property type="project" value="InterPro"/>
</dbReference>
<dbReference type="CDD" id="cd11304">
    <property type="entry name" value="Cadherin_repeat"/>
    <property type="match status" value="5"/>
</dbReference>
<dbReference type="FunFam" id="4.10.900.10:FF:000001">
    <property type="entry name" value="Cadherin 2"/>
    <property type="match status" value="1"/>
</dbReference>
<dbReference type="FunFam" id="2.60.40.60:FF:000008">
    <property type="entry name" value="Cadherin 24"/>
    <property type="match status" value="1"/>
</dbReference>
<dbReference type="FunFam" id="2.60.40.60:FF:000009">
    <property type="entry name" value="Cadherin 24"/>
    <property type="match status" value="1"/>
</dbReference>
<dbReference type="FunFam" id="2.60.40.60:FF:000012">
    <property type="entry name" value="Cadherin 24"/>
    <property type="match status" value="1"/>
</dbReference>
<dbReference type="FunFam" id="2.60.40.60:FF:000017">
    <property type="entry name" value="Cadherin 24"/>
    <property type="match status" value="1"/>
</dbReference>
<dbReference type="FunFam" id="2.60.40.60:FF:000014">
    <property type="entry name" value="Cadherin 8"/>
    <property type="match status" value="1"/>
</dbReference>
<dbReference type="Gene3D" id="2.60.40.60">
    <property type="entry name" value="Cadherins"/>
    <property type="match status" value="5"/>
</dbReference>
<dbReference type="Gene3D" id="4.10.900.10">
    <property type="entry name" value="TCF3-CBD (Catenin binding domain)"/>
    <property type="match status" value="1"/>
</dbReference>
<dbReference type="InterPro" id="IPR039808">
    <property type="entry name" value="Cadherin"/>
</dbReference>
<dbReference type="InterPro" id="IPR002126">
    <property type="entry name" value="Cadherin-like_dom"/>
</dbReference>
<dbReference type="InterPro" id="IPR015919">
    <property type="entry name" value="Cadherin-like_sf"/>
</dbReference>
<dbReference type="InterPro" id="IPR020894">
    <property type="entry name" value="Cadherin_CS"/>
</dbReference>
<dbReference type="InterPro" id="IPR000233">
    <property type="entry name" value="Cadherin_Y-type_LIR"/>
</dbReference>
<dbReference type="InterPro" id="IPR027397">
    <property type="entry name" value="Catenin-bd_sf"/>
</dbReference>
<dbReference type="PANTHER" id="PTHR24027:SF85">
    <property type="entry name" value="CADHERIN-11"/>
    <property type="match status" value="1"/>
</dbReference>
<dbReference type="PANTHER" id="PTHR24027">
    <property type="entry name" value="CADHERIN-23"/>
    <property type="match status" value="1"/>
</dbReference>
<dbReference type="Pfam" id="PF01049">
    <property type="entry name" value="CADH_Y-type_LIR"/>
    <property type="match status" value="1"/>
</dbReference>
<dbReference type="Pfam" id="PF00028">
    <property type="entry name" value="Cadherin"/>
    <property type="match status" value="5"/>
</dbReference>
<dbReference type="PRINTS" id="PR00205">
    <property type="entry name" value="CADHERIN"/>
</dbReference>
<dbReference type="SMART" id="SM00112">
    <property type="entry name" value="CA"/>
    <property type="match status" value="5"/>
</dbReference>
<dbReference type="SUPFAM" id="SSF49313">
    <property type="entry name" value="Cadherin-like"/>
    <property type="match status" value="5"/>
</dbReference>
<dbReference type="PROSITE" id="PS00232">
    <property type="entry name" value="CADHERIN_1"/>
    <property type="match status" value="3"/>
</dbReference>
<dbReference type="PROSITE" id="PS50268">
    <property type="entry name" value="CADHERIN_2"/>
    <property type="match status" value="5"/>
</dbReference>
<name>CAD11_CHICK</name>
<feature type="signal peptide" evidence="3">
    <location>
        <begin position="1"/>
        <end position="22"/>
    </location>
</feature>
<feature type="propeptide" id="PRO_0000003789" evidence="3">
    <location>
        <begin position="23"/>
        <end position="53"/>
    </location>
</feature>
<feature type="chain" id="PRO_0000003790" description="Cadherin-11">
    <location>
        <begin position="54"/>
        <end position="792"/>
    </location>
</feature>
<feature type="topological domain" description="Extracellular" evidence="3">
    <location>
        <begin position="54"/>
        <end position="613"/>
    </location>
</feature>
<feature type="transmembrane region" description="Helical" evidence="3">
    <location>
        <begin position="614"/>
        <end position="634"/>
    </location>
</feature>
<feature type="topological domain" description="Cytoplasmic" evidence="3">
    <location>
        <begin position="635"/>
        <end position="792"/>
    </location>
</feature>
<feature type="domain" description="Cadherin 1" evidence="4">
    <location>
        <begin position="54"/>
        <end position="159"/>
    </location>
</feature>
<feature type="domain" description="Cadherin 2" evidence="4">
    <location>
        <begin position="160"/>
        <end position="268"/>
    </location>
</feature>
<feature type="domain" description="Cadherin 3" evidence="4">
    <location>
        <begin position="269"/>
        <end position="383"/>
    </location>
</feature>
<feature type="domain" description="Cadherin 4" evidence="4">
    <location>
        <begin position="384"/>
        <end position="486"/>
    </location>
</feature>
<feature type="domain" description="Cadherin 5" evidence="4">
    <location>
        <begin position="487"/>
        <end position="608"/>
    </location>
</feature>
<feature type="glycosylation site" description="N-linked (GlcNAc...) asparagine" evidence="3">
    <location>
        <position position="455"/>
    </location>
</feature>
<feature type="glycosylation site" description="N-linked (GlcNAc...) asparagine" evidence="3">
    <location>
        <position position="536"/>
    </location>
</feature>
<feature type="glycosylation site" description="N-linked (GlcNAc...) asparagine" evidence="3">
    <location>
        <position position="594"/>
    </location>
</feature>
<comment type="function">
    <text evidence="2">Cadherins are calcium-dependent cell adhesion proteins. They preferentially interact with themselves in a homophilic manner in connecting cells; cadherins may thus contribute to the sorting of heterogeneous cell types. Required for proper focal adhesion assembly. Involved in the regulation of cell migration.</text>
</comment>
<comment type="subcellular location">
    <subcellularLocation>
        <location evidence="5">Cell membrane</location>
        <topology evidence="5">Single-pass type I membrane protein</topology>
    </subcellularLocation>
</comment>
<comment type="domain">
    <text evidence="1">Three calcium ions are usually bound at the interface of each cadherin domain and rigidify the connections, imparting a strong curvature to the full-length ectodomain.</text>
</comment>